<proteinExistence type="evidence at protein level"/>
<reference key="1">
    <citation type="journal article" date="1997" name="Gene">
        <title>The adenylate kinase genes of M. voltae, M. thermolithotrophicus, M. jannaschii, and M. igneus define a new family of adenylate kinases.</title>
        <authorList>
            <person name="Ferber D.M."/>
            <person name="Haney P.J."/>
            <person name="Berk H."/>
            <person name="Lynn D."/>
            <person name="Konisky J."/>
        </authorList>
    </citation>
    <scope>NUCLEOTIDE SEQUENCE [GENOMIC DNA]</scope>
</reference>
<reference key="2">
    <citation type="journal article" date="1995" name="J. Bacteriol.">
        <title>The adenylate kinases from a mesophilic and three thermophilic methanogenic members of the Archaea.</title>
        <authorList>
            <person name="Rusnak P."/>
            <person name="Haney P."/>
            <person name="Konisky J."/>
        </authorList>
    </citation>
    <scope>PROTEIN SEQUENCE OF 1-30</scope>
</reference>
<comment type="catalytic activity">
    <reaction>
        <text>AMP + ATP = 2 ADP</text>
        <dbReference type="Rhea" id="RHEA:12973"/>
        <dbReference type="ChEBI" id="CHEBI:30616"/>
        <dbReference type="ChEBI" id="CHEBI:456215"/>
        <dbReference type="ChEBI" id="CHEBI:456216"/>
        <dbReference type="EC" id="2.7.4.3"/>
    </reaction>
</comment>
<comment type="biophysicochemical properties">
    <temperatureDependence>
        <text>Active from 70 to 90 degrees Celsius.</text>
    </temperatureDependence>
</comment>
<comment type="subunit">
    <text evidence="2">Monomer.</text>
</comment>
<comment type="subcellular location">
    <subcellularLocation>
        <location>Cytoplasm</location>
    </subcellularLocation>
</comment>
<comment type="similarity">
    <text evidence="2">Belongs to the archaeal adenylate kinase family.</text>
</comment>
<evidence type="ECO:0000250" key="1"/>
<evidence type="ECO:0000305" key="2"/>
<evidence type="ECO:0007829" key="3">
    <source>
        <dbReference type="PDB" id="6PSP"/>
    </source>
</evidence>
<protein>
    <recommendedName>
        <fullName>Adenylate kinase</fullName>
        <shortName>AK</shortName>
        <ecNumber>2.7.4.3</ecNumber>
    </recommendedName>
    <alternativeName>
        <fullName>ATP-AMP transphosphorylase</fullName>
    </alternativeName>
</protein>
<accession>P43408</accession>
<organism>
    <name type="scientific">Methanotorris igneus</name>
    <name type="common">Methanococcus igneus</name>
    <dbReference type="NCBI Taxonomy" id="2189"/>
    <lineage>
        <taxon>Archaea</taxon>
        <taxon>Methanobacteriati</taxon>
        <taxon>Methanobacteriota</taxon>
        <taxon>Methanomada group</taxon>
        <taxon>Methanococci</taxon>
        <taxon>Methanococcales</taxon>
        <taxon>Methanocaldococcaceae</taxon>
        <taxon>Methanotorris</taxon>
    </lineage>
</organism>
<feature type="chain" id="PRO_0000131813" description="Adenylate kinase">
    <location>
        <begin position="1"/>
        <end position="192"/>
    </location>
</feature>
<feature type="binding site" evidence="1">
    <location>
        <begin position="10"/>
        <end position="18"/>
    </location>
    <ligand>
        <name>ATP</name>
        <dbReference type="ChEBI" id="CHEBI:30616"/>
    </ligand>
</feature>
<feature type="sequence conflict" description="In Ref. 2; AA sequence." evidence="2" ref="2">
    <original>V</original>
    <variation>I</variation>
    <location>
        <position position="8"/>
    </location>
</feature>
<feature type="sequence conflict" description="In Ref. 2; AA sequence." evidence="2" ref="2">
    <original>T</original>
    <variation>L</variation>
    <location>
        <position position="20"/>
    </location>
</feature>
<feature type="strand" evidence="3">
    <location>
        <begin position="5"/>
        <end position="9"/>
    </location>
</feature>
<feature type="helix" evidence="3">
    <location>
        <begin position="16"/>
        <end position="27"/>
    </location>
</feature>
<feature type="helix" evidence="3">
    <location>
        <begin position="28"/>
        <end position="30"/>
    </location>
</feature>
<feature type="strand" evidence="3">
    <location>
        <begin position="35"/>
        <end position="38"/>
    </location>
</feature>
<feature type="helix" evidence="3">
    <location>
        <begin position="39"/>
        <end position="49"/>
    </location>
</feature>
<feature type="strand" evidence="3">
    <location>
        <begin position="54"/>
        <end position="56"/>
    </location>
</feature>
<feature type="helix" evidence="3">
    <location>
        <begin position="59"/>
        <end position="61"/>
    </location>
</feature>
<feature type="helix" evidence="3">
    <location>
        <begin position="64"/>
        <end position="84"/>
    </location>
</feature>
<feature type="strand" evidence="3">
    <location>
        <begin position="87"/>
        <end position="90"/>
    </location>
</feature>
<feature type="strand" evidence="3">
    <location>
        <begin position="93"/>
        <end position="97"/>
    </location>
</feature>
<feature type="strand" evidence="3">
    <location>
        <begin position="100"/>
        <end position="105"/>
    </location>
</feature>
<feature type="helix" evidence="3">
    <location>
        <begin position="107"/>
        <end position="113"/>
    </location>
</feature>
<feature type="strand" evidence="3">
    <location>
        <begin position="116"/>
        <end position="122"/>
    </location>
</feature>
<feature type="helix" evidence="3">
    <location>
        <begin position="125"/>
        <end position="133"/>
    </location>
</feature>
<feature type="strand" evidence="3">
    <location>
        <begin position="136"/>
        <end position="138"/>
    </location>
</feature>
<feature type="helix" evidence="3">
    <location>
        <begin position="145"/>
        <end position="166"/>
    </location>
</feature>
<feature type="strand" evidence="3">
    <location>
        <begin position="169"/>
        <end position="174"/>
    </location>
</feature>
<feature type="helix" evidence="3">
    <location>
        <begin position="180"/>
        <end position="190"/>
    </location>
</feature>
<sequence length="192" mass="21400">MKNKVVVVTGVPGVGGTTLTQKTIEKLKEEGIEYKMVNFGTVMFEVAKEEGLVEDRDQMRKLDPDTQKRIQKLAGRKIAEMAKESNVIVDTHSTVKTPKGYLAGLPIWVLEELNPDIIVIVETSSDEILMRRLGDATRNRDIELTSDIDEHQFMNRCAAMAYGVLTGATVKIIKNRDGLLDKAVEELISVLK</sequence>
<keyword id="KW-0002">3D-structure</keyword>
<keyword id="KW-0067">ATP-binding</keyword>
<keyword id="KW-0963">Cytoplasm</keyword>
<keyword id="KW-0903">Direct protein sequencing</keyword>
<keyword id="KW-0418">Kinase</keyword>
<keyword id="KW-0547">Nucleotide-binding</keyword>
<keyword id="KW-0808">Transferase</keyword>
<dbReference type="EC" id="2.7.4.3"/>
<dbReference type="EMBL" id="U39881">
    <property type="protein sequence ID" value="AAC44862.1"/>
    <property type="molecule type" value="Genomic_DNA"/>
</dbReference>
<dbReference type="PDB" id="6PJW">
    <property type="method" value="X-ray"/>
    <property type="resolution" value="2.40 A"/>
    <property type="chains" value="A/B/C/D/E/F/G/H/I/J/K/L=1-192"/>
</dbReference>
<dbReference type="PDB" id="6PK5">
    <property type="method" value="X-ray"/>
    <property type="resolution" value="2.30 A"/>
    <property type="chains" value="A/B/C/D/E/F=1-192"/>
</dbReference>
<dbReference type="PDB" id="6PSP">
    <property type="method" value="X-ray"/>
    <property type="resolution" value="2.25 A"/>
    <property type="chains" value="A/B/C/D/E/F=1-192"/>
</dbReference>
<dbReference type="PDBsum" id="6PJW"/>
<dbReference type="PDBsum" id="6PK5"/>
<dbReference type="PDBsum" id="6PSP"/>
<dbReference type="SMR" id="P43408"/>
<dbReference type="OMA" id="YAMHSNA"/>
<dbReference type="BRENDA" id="2.7.4.3">
    <property type="organism ID" value="13534"/>
</dbReference>
<dbReference type="GO" id="GO:0005737">
    <property type="term" value="C:cytoplasm"/>
    <property type="evidence" value="ECO:0007669"/>
    <property type="project" value="UniProtKB-SubCell"/>
</dbReference>
<dbReference type="GO" id="GO:0004017">
    <property type="term" value="F:adenylate kinase activity"/>
    <property type="evidence" value="ECO:0007669"/>
    <property type="project" value="UniProtKB-UniRule"/>
</dbReference>
<dbReference type="GO" id="GO:0005524">
    <property type="term" value="F:ATP binding"/>
    <property type="evidence" value="ECO:0007669"/>
    <property type="project" value="UniProtKB-UniRule"/>
</dbReference>
<dbReference type="Gene3D" id="3.40.50.300">
    <property type="entry name" value="P-loop containing nucleotide triphosphate hydrolases"/>
    <property type="match status" value="1"/>
</dbReference>
<dbReference type="HAMAP" id="MF_00234">
    <property type="entry name" value="Adenylate_kinase_AdkA"/>
    <property type="match status" value="1"/>
</dbReference>
<dbReference type="InterPro" id="IPR023477">
    <property type="entry name" value="Adenylate_kinase_AdkA"/>
</dbReference>
<dbReference type="InterPro" id="IPR027417">
    <property type="entry name" value="P-loop_NTPase"/>
</dbReference>
<dbReference type="NCBIfam" id="NF003122">
    <property type="entry name" value="PRK04040.1"/>
    <property type="match status" value="1"/>
</dbReference>
<dbReference type="Pfam" id="PF13207">
    <property type="entry name" value="AAA_17"/>
    <property type="match status" value="1"/>
</dbReference>
<dbReference type="SUPFAM" id="SSF52540">
    <property type="entry name" value="P-loop containing nucleoside triphosphate hydrolases"/>
    <property type="match status" value="1"/>
</dbReference>
<name>KADA_METIG</name>
<gene>
    <name type="primary">adkA</name>
    <name type="synonym">adk</name>
</gene>